<proteinExistence type="inferred from homology"/>
<gene>
    <name evidence="1" type="primary">nfo</name>
    <name type="ordered locus">Cphamn1_1882</name>
</gene>
<evidence type="ECO:0000255" key="1">
    <source>
        <dbReference type="HAMAP-Rule" id="MF_00152"/>
    </source>
</evidence>
<feature type="chain" id="PRO_1000096873" description="Probable endonuclease 4">
    <location>
        <begin position="1"/>
        <end position="284"/>
    </location>
</feature>
<feature type="binding site" evidence="1">
    <location>
        <position position="69"/>
    </location>
    <ligand>
        <name>Zn(2+)</name>
        <dbReference type="ChEBI" id="CHEBI:29105"/>
        <label>1</label>
    </ligand>
</feature>
<feature type="binding site" evidence="1">
    <location>
        <position position="109"/>
    </location>
    <ligand>
        <name>Zn(2+)</name>
        <dbReference type="ChEBI" id="CHEBI:29105"/>
        <label>1</label>
    </ligand>
</feature>
<feature type="binding site" evidence="1">
    <location>
        <position position="145"/>
    </location>
    <ligand>
        <name>Zn(2+)</name>
        <dbReference type="ChEBI" id="CHEBI:29105"/>
        <label>1</label>
    </ligand>
</feature>
<feature type="binding site" evidence="1">
    <location>
        <position position="145"/>
    </location>
    <ligand>
        <name>Zn(2+)</name>
        <dbReference type="ChEBI" id="CHEBI:29105"/>
        <label>2</label>
    </ligand>
</feature>
<feature type="binding site" evidence="1">
    <location>
        <position position="179"/>
    </location>
    <ligand>
        <name>Zn(2+)</name>
        <dbReference type="ChEBI" id="CHEBI:29105"/>
        <label>2</label>
    </ligand>
</feature>
<feature type="binding site" evidence="1">
    <location>
        <position position="182"/>
    </location>
    <ligand>
        <name>Zn(2+)</name>
        <dbReference type="ChEBI" id="CHEBI:29105"/>
        <label>3</label>
    </ligand>
</feature>
<feature type="binding site" evidence="1">
    <location>
        <position position="216"/>
    </location>
    <ligand>
        <name>Zn(2+)</name>
        <dbReference type="ChEBI" id="CHEBI:29105"/>
        <label>2</label>
    </ligand>
</feature>
<feature type="binding site" evidence="1">
    <location>
        <position position="229"/>
    </location>
    <ligand>
        <name>Zn(2+)</name>
        <dbReference type="ChEBI" id="CHEBI:29105"/>
        <label>3</label>
    </ligand>
</feature>
<feature type="binding site" evidence="1">
    <location>
        <position position="231"/>
    </location>
    <ligand>
        <name>Zn(2+)</name>
        <dbReference type="ChEBI" id="CHEBI:29105"/>
        <label>3</label>
    </ligand>
</feature>
<feature type="binding site" evidence="1">
    <location>
        <position position="261"/>
    </location>
    <ligand>
        <name>Zn(2+)</name>
        <dbReference type="ChEBI" id="CHEBI:29105"/>
        <label>2</label>
    </ligand>
</feature>
<comment type="function">
    <text evidence="1">Endonuclease IV plays a role in DNA repair. It cleaves phosphodiester bonds at apurinic or apyrimidinic (AP) sites, generating a 3'-hydroxyl group and a 5'-terminal sugar phosphate.</text>
</comment>
<comment type="catalytic activity">
    <reaction evidence="1">
        <text>Endonucleolytic cleavage to 5'-phosphooligonucleotide end-products.</text>
        <dbReference type="EC" id="3.1.21.2"/>
    </reaction>
</comment>
<comment type="cofactor">
    <cofactor evidence="1">
        <name>Zn(2+)</name>
        <dbReference type="ChEBI" id="CHEBI:29105"/>
    </cofactor>
    <text evidence="1">Binds 3 Zn(2+) ions.</text>
</comment>
<comment type="similarity">
    <text evidence="1">Belongs to the AP endonuclease 2 family.</text>
</comment>
<organism>
    <name type="scientific">Chlorobium phaeobacteroides (strain BS1)</name>
    <dbReference type="NCBI Taxonomy" id="331678"/>
    <lineage>
        <taxon>Bacteria</taxon>
        <taxon>Pseudomonadati</taxon>
        <taxon>Chlorobiota</taxon>
        <taxon>Chlorobiia</taxon>
        <taxon>Chlorobiales</taxon>
        <taxon>Chlorobiaceae</taxon>
        <taxon>Chlorobium/Pelodictyon group</taxon>
        <taxon>Chlorobium</taxon>
    </lineage>
</organism>
<dbReference type="EC" id="3.1.21.2" evidence="1"/>
<dbReference type="EMBL" id="CP001101">
    <property type="protein sequence ID" value="ACE04799.1"/>
    <property type="molecule type" value="Genomic_DNA"/>
</dbReference>
<dbReference type="SMR" id="B3ELV8"/>
<dbReference type="STRING" id="331678.Cphamn1_1882"/>
<dbReference type="KEGG" id="cpb:Cphamn1_1882"/>
<dbReference type="eggNOG" id="COG0648">
    <property type="taxonomic scope" value="Bacteria"/>
</dbReference>
<dbReference type="HOGENOM" id="CLU_025885_0_4_10"/>
<dbReference type="OrthoDB" id="9805666at2"/>
<dbReference type="GO" id="GO:0008833">
    <property type="term" value="F:deoxyribonuclease IV (phage-T4-induced) activity"/>
    <property type="evidence" value="ECO:0007669"/>
    <property type="project" value="UniProtKB-UniRule"/>
</dbReference>
<dbReference type="GO" id="GO:0003677">
    <property type="term" value="F:DNA binding"/>
    <property type="evidence" value="ECO:0007669"/>
    <property type="project" value="InterPro"/>
</dbReference>
<dbReference type="GO" id="GO:0003906">
    <property type="term" value="F:DNA-(apurinic or apyrimidinic site) endonuclease activity"/>
    <property type="evidence" value="ECO:0007669"/>
    <property type="project" value="TreeGrafter"/>
</dbReference>
<dbReference type="GO" id="GO:0008081">
    <property type="term" value="F:phosphoric diester hydrolase activity"/>
    <property type="evidence" value="ECO:0007669"/>
    <property type="project" value="TreeGrafter"/>
</dbReference>
<dbReference type="GO" id="GO:0008270">
    <property type="term" value="F:zinc ion binding"/>
    <property type="evidence" value="ECO:0007669"/>
    <property type="project" value="UniProtKB-UniRule"/>
</dbReference>
<dbReference type="GO" id="GO:0006284">
    <property type="term" value="P:base-excision repair"/>
    <property type="evidence" value="ECO:0007669"/>
    <property type="project" value="TreeGrafter"/>
</dbReference>
<dbReference type="CDD" id="cd00019">
    <property type="entry name" value="AP2Ec"/>
    <property type="match status" value="1"/>
</dbReference>
<dbReference type="FunFam" id="3.20.20.150:FF:000001">
    <property type="entry name" value="Probable endonuclease 4"/>
    <property type="match status" value="1"/>
</dbReference>
<dbReference type="Gene3D" id="3.20.20.150">
    <property type="entry name" value="Divalent-metal-dependent TIM barrel enzymes"/>
    <property type="match status" value="1"/>
</dbReference>
<dbReference type="HAMAP" id="MF_00152">
    <property type="entry name" value="Nfo"/>
    <property type="match status" value="1"/>
</dbReference>
<dbReference type="InterPro" id="IPR001719">
    <property type="entry name" value="AP_endonuc_2"/>
</dbReference>
<dbReference type="InterPro" id="IPR018246">
    <property type="entry name" value="AP_endonuc_F2_Zn_BS"/>
</dbReference>
<dbReference type="InterPro" id="IPR036237">
    <property type="entry name" value="Xyl_isomerase-like_sf"/>
</dbReference>
<dbReference type="InterPro" id="IPR013022">
    <property type="entry name" value="Xyl_isomerase-like_TIM-brl"/>
</dbReference>
<dbReference type="NCBIfam" id="TIGR00587">
    <property type="entry name" value="nfo"/>
    <property type="match status" value="1"/>
</dbReference>
<dbReference type="NCBIfam" id="NF002199">
    <property type="entry name" value="PRK01060.1-4"/>
    <property type="match status" value="1"/>
</dbReference>
<dbReference type="PANTHER" id="PTHR21445:SF0">
    <property type="entry name" value="APURINIC-APYRIMIDINIC ENDONUCLEASE"/>
    <property type="match status" value="1"/>
</dbReference>
<dbReference type="PANTHER" id="PTHR21445">
    <property type="entry name" value="ENDONUCLEASE IV ENDODEOXYRIBONUCLEASE IV"/>
    <property type="match status" value="1"/>
</dbReference>
<dbReference type="Pfam" id="PF01261">
    <property type="entry name" value="AP_endonuc_2"/>
    <property type="match status" value="1"/>
</dbReference>
<dbReference type="SMART" id="SM00518">
    <property type="entry name" value="AP2Ec"/>
    <property type="match status" value="1"/>
</dbReference>
<dbReference type="SUPFAM" id="SSF51658">
    <property type="entry name" value="Xylose isomerase-like"/>
    <property type="match status" value="1"/>
</dbReference>
<dbReference type="PROSITE" id="PS00729">
    <property type="entry name" value="AP_NUCLEASE_F2_1"/>
    <property type="match status" value="1"/>
</dbReference>
<dbReference type="PROSITE" id="PS00730">
    <property type="entry name" value="AP_NUCLEASE_F2_2"/>
    <property type="match status" value="1"/>
</dbReference>
<dbReference type="PROSITE" id="PS51432">
    <property type="entry name" value="AP_NUCLEASE_F2_4"/>
    <property type="match status" value="1"/>
</dbReference>
<keyword id="KW-0227">DNA damage</keyword>
<keyword id="KW-0234">DNA repair</keyword>
<keyword id="KW-0255">Endonuclease</keyword>
<keyword id="KW-0378">Hydrolase</keyword>
<keyword id="KW-0479">Metal-binding</keyword>
<keyword id="KW-0540">Nuclease</keyword>
<keyword id="KW-0862">Zinc</keyword>
<reference key="1">
    <citation type="submission" date="2008-06" db="EMBL/GenBank/DDBJ databases">
        <title>Complete sequence of Chlorobium phaeobacteroides BS1.</title>
        <authorList>
            <consortium name="US DOE Joint Genome Institute"/>
            <person name="Lucas S."/>
            <person name="Copeland A."/>
            <person name="Lapidus A."/>
            <person name="Glavina del Rio T."/>
            <person name="Dalin E."/>
            <person name="Tice H."/>
            <person name="Bruce D."/>
            <person name="Goodwin L."/>
            <person name="Pitluck S."/>
            <person name="Schmutz J."/>
            <person name="Larimer F."/>
            <person name="Land M."/>
            <person name="Hauser L."/>
            <person name="Kyrpides N."/>
            <person name="Ovchinnikova G."/>
            <person name="Li T."/>
            <person name="Liu Z."/>
            <person name="Zhao F."/>
            <person name="Overmann J."/>
            <person name="Bryant D.A."/>
            <person name="Richardson P."/>
        </authorList>
    </citation>
    <scope>NUCLEOTIDE SEQUENCE [LARGE SCALE GENOMIC DNA]</scope>
    <source>
        <strain>BS1</strain>
    </source>
</reference>
<sequence length="284" mass="31477">MRYIGAHVSIAGGIENAPLRAQEIGATAFALFTKNQRQWKAPALTAKTIEAFRENCERCGYRPEHILPHDSYLINLGSPDAQKLDRSRNAFIDEMQRTEALGLVRLNLHPGSHLRESSEEACLETIAESVNLAHEATNTAVAVLENTAGQGSNLGHTFEQLAFIIQRVHDKSRVGVCLDTCHLFAAGYDLRTEEAVNGMFELFDASIGLHYLKGMHLNDAKPELDSRRDRHESIGKGKIGLDGFAAIIRHPASAEIPLILETPQPEIWSEEITLLRSFEEAQNC</sequence>
<name>END4_CHLPB</name>
<accession>B3ELV8</accession>
<protein>
    <recommendedName>
        <fullName evidence="1">Probable endonuclease 4</fullName>
        <ecNumber evidence="1">3.1.21.2</ecNumber>
    </recommendedName>
    <alternativeName>
        <fullName evidence="1">Endodeoxyribonuclease IV</fullName>
    </alternativeName>
    <alternativeName>
        <fullName evidence="1">Endonuclease IV</fullName>
    </alternativeName>
</protein>